<gene>
    <name type="ordered locus">SO_0917</name>
</gene>
<reference key="1">
    <citation type="journal article" date="2002" name="Nat. Biotechnol.">
        <title>Genome sequence of the dissimilatory metal ion-reducing bacterium Shewanella oneidensis.</title>
        <authorList>
            <person name="Heidelberg J.F."/>
            <person name="Paulsen I.T."/>
            <person name="Nelson K.E."/>
            <person name="Gaidos E.J."/>
            <person name="Nelson W.C."/>
            <person name="Read T.D."/>
            <person name="Eisen J.A."/>
            <person name="Seshadri R."/>
            <person name="Ward N.L."/>
            <person name="Methe B.A."/>
            <person name="Clayton R.A."/>
            <person name="Meyer T."/>
            <person name="Tsapin A."/>
            <person name="Scott J."/>
            <person name="Beanan M.J."/>
            <person name="Brinkac L.M."/>
            <person name="Daugherty S.C."/>
            <person name="DeBoy R.T."/>
            <person name="Dodson R.J."/>
            <person name="Durkin A.S."/>
            <person name="Haft D.H."/>
            <person name="Kolonay J.F."/>
            <person name="Madupu R."/>
            <person name="Peterson J.D."/>
            <person name="Umayam L.A."/>
            <person name="White O."/>
            <person name="Wolf A.M."/>
            <person name="Vamathevan J.J."/>
            <person name="Weidman J.F."/>
            <person name="Impraim M."/>
            <person name="Lee K."/>
            <person name="Berry K.J."/>
            <person name="Lee C."/>
            <person name="Mueller J."/>
            <person name="Khouri H.M."/>
            <person name="Gill J."/>
            <person name="Utterback T.R."/>
            <person name="McDonald L.A."/>
            <person name="Feldblyum T.V."/>
            <person name="Smith H.O."/>
            <person name="Venter J.C."/>
            <person name="Nealson K.H."/>
            <person name="Fraser C.M."/>
        </authorList>
    </citation>
    <scope>NUCLEOTIDE SEQUENCE [LARGE SCALE GENOMIC DNA]</scope>
    <source>
        <strain>ATCC 700550 / JCM 31522 / CIP 106686 / LMG 19005 / NCIMB 14063 / MR-1</strain>
    </source>
</reference>
<feature type="chain" id="PRO_0000156349" description="Inosine/xanthosine triphosphatase">
    <location>
        <begin position="1"/>
        <end position="179"/>
    </location>
</feature>
<feature type="binding site" evidence="1">
    <location>
        <begin position="71"/>
        <end position="72"/>
    </location>
    <ligand>
        <name>substrate</name>
    </ligand>
</feature>
<feature type="binding site" evidence="1">
    <location>
        <position position="71"/>
    </location>
    <ligand>
        <name>Mg(2+)</name>
        <dbReference type="ChEBI" id="CHEBI:18420"/>
    </ligand>
</feature>
<evidence type="ECO:0000255" key="1">
    <source>
        <dbReference type="HAMAP-Rule" id="MF_00648"/>
    </source>
</evidence>
<proteinExistence type="inferred from homology"/>
<name>NCPP_SHEON</name>
<accession>Q8EIC6</accession>
<dbReference type="EC" id="3.6.1.73" evidence="1"/>
<dbReference type="EMBL" id="AE014299">
    <property type="protein sequence ID" value="AAN53991.1"/>
    <property type="molecule type" value="Genomic_DNA"/>
</dbReference>
<dbReference type="RefSeq" id="NP_716546.1">
    <property type="nucleotide sequence ID" value="NC_004347.2"/>
</dbReference>
<dbReference type="RefSeq" id="WP_011071197.1">
    <property type="nucleotide sequence ID" value="NC_004347.2"/>
</dbReference>
<dbReference type="SMR" id="Q8EIC6"/>
<dbReference type="STRING" id="211586.SO_0917"/>
<dbReference type="PaxDb" id="211586-SO_0917"/>
<dbReference type="KEGG" id="son:SO_0917"/>
<dbReference type="PATRIC" id="fig|211586.12.peg.879"/>
<dbReference type="eggNOG" id="COG1986">
    <property type="taxonomic scope" value="Bacteria"/>
</dbReference>
<dbReference type="HOGENOM" id="CLU_087417_1_0_6"/>
<dbReference type="OrthoDB" id="6334099at2"/>
<dbReference type="PhylomeDB" id="Q8EIC6"/>
<dbReference type="BioCyc" id="SONE211586:G1GMP-854-MONOMER"/>
<dbReference type="Proteomes" id="UP000008186">
    <property type="component" value="Chromosome"/>
</dbReference>
<dbReference type="GO" id="GO:0103023">
    <property type="term" value="F:ITPase activity"/>
    <property type="evidence" value="ECO:0007669"/>
    <property type="project" value="UniProtKB-EC"/>
</dbReference>
<dbReference type="GO" id="GO:0046872">
    <property type="term" value="F:metal ion binding"/>
    <property type="evidence" value="ECO:0007669"/>
    <property type="project" value="UniProtKB-KW"/>
</dbReference>
<dbReference type="GO" id="GO:0000166">
    <property type="term" value="F:nucleotide binding"/>
    <property type="evidence" value="ECO:0007669"/>
    <property type="project" value="UniProtKB-KW"/>
</dbReference>
<dbReference type="GO" id="GO:0017111">
    <property type="term" value="F:ribonucleoside triphosphate phosphatase activity"/>
    <property type="evidence" value="ECO:0000250"/>
    <property type="project" value="UniProtKB"/>
</dbReference>
<dbReference type="GO" id="GO:0009117">
    <property type="term" value="P:nucleotide metabolic process"/>
    <property type="evidence" value="ECO:0007669"/>
    <property type="project" value="UniProtKB-KW"/>
</dbReference>
<dbReference type="GO" id="GO:0006772">
    <property type="term" value="P:thiamine metabolic process"/>
    <property type="evidence" value="ECO:0000318"/>
    <property type="project" value="GO_Central"/>
</dbReference>
<dbReference type="FunFam" id="3.90.950.10:FF:000002">
    <property type="entry name" value="Inosine/xanthosine triphosphatase"/>
    <property type="match status" value="1"/>
</dbReference>
<dbReference type="Gene3D" id="3.90.950.10">
    <property type="match status" value="1"/>
</dbReference>
<dbReference type="HAMAP" id="MF_00648">
    <property type="entry name" value="Non_canon_purine_NTPase_YjjX"/>
    <property type="match status" value="1"/>
</dbReference>
<dbReference type="InterPro" id="IPR029001">
    <property type="entry name" value="ITPase-like_fam"/>
</dbReference>
<dbReference type="InterPro" id="IPR002786">
    <property type="entry name" value="Non_canon_purine_NTPase"/>
</dbReference>
<dbReference type="InterPro" id="IPR026533">
    <property type="entry name" value="NTPase/PRRC1"/>
</dbReference>
<dbReference type="InterPro" id="IPR050299">
    <property type="entry name" value="YjjX_NTPase"/>
</dbReference>
<dbReference type="NCBIfam" id="TIGR00258">
    <property type="entry name" value="inosine/xanthosine triphosphatase"/>
    <property type="match status" value="1"/>
</dbReference>
<dbReference type="NCBIfam" id="NF003459">
    <property type="entry name" value="PRK05074.1"/>
    <property type="match status" value="1"/>
</dbReference>
<dbReference type="PANTHER" id="PTHR34699">
    <property type="match status" value="1"/>
</dbReference>
<dbReference type="PANTHER" id="PTHR34699:SF2">
    <property type="entry name" value="NON-CANONICAL PURINE NTP PHOSPHATASE_PRRC1 DOMAIN-CONTAINING PROTEIN"/>
    <property type="match status" value="1"/>
</dbReference>
<dbReference type="Pfam" id="PF01931">
    <property type="entry name" value="NTPase_I-T"/>
    <property type="match status" value="1"/>
</dbReference>
<dbReference type="SUPFAM" id="SSF52972">
    <property type="entry name" value="ITPase-like"/>
    <property type="match status" value="1"/>
</dbReference>
<comment type="function">
    <text evidence="1">Phosphatase that hydrolyzes non-canonical purine nucleotides such as XTP and ITP to their respective diphosphate derivatives. Probably excludes non-canonical purines from DNA/RNA precursor pool, thus preventing their incorporation into DNA/RNA and avoiding chromosomal lesions.</text>
</comment>
<comment type="catalytic activity">
    <reaction evidence="1">
        <text>XTP + H2O = XDP + phosphate + H(+)</text>
        <dbReference type="Rhea" id="RHEA:28406"/>
        <dbReference type="ChEBI" id="CHEBI:15377"/>
        <dbReference type="ChEBI" id="CHEBI:15378"/>
        <dbReference type="ChEBI" id="CHEBI:43474"/>
        <dbReference type="ChEBI" id="CHEBI:59884"/>
        <dbReference type="ChEBI" id="CHEBI:61314"/>
        <dbReference type="EC" id="3.6.1.73"/>
    </reaction>
</comment>
<comment type="catalytic activity">
    <reaction evidence="1">
        <text>ITP + H2O = IDP + phosphate + H(+)</text>
        <dbReference type="Rhea" id="RHEA:28330"/>
        <dbReference type="ChEBI" id="CHEBI:15377"/>
        <dbReference type="ChEBI" id="CHEBI:15378"/>
        <dbReference type="ChEBI" id="CHEBI:43474"/>
        <dbReference type="ChEBI" id="CHEBI:58280"/>
        <dbReference type="ChEBI" id="CHEBI:61402"/>
        <dbReference type="EC" id="3.6.1.73"/>
    </reaction>
</comment>
<comment type="cofactor">
    <cofactor evidence="1">
        <name>Mg(2+)</name>
        <dbReference type="ChEBI" id="CHEBI:18420"/>
    </cofactor>
    <cofactor evidence="1">
        <name>Mn(2+)</name>
        <dbReference type="ChEBI" id="CHEBI:29035"/>
    </cofactor>
    <text evidence="1">Binds 1 divalent metal cation per subunit; can use either Mg(2+) or Mn(2+).</text>
</comment>
<comment type="subunit">
    <text evidence="1">Homodimer.</text>
</comment>
<comment type="similarity">
    <text evidence="1">Belongs to the YjjX NTPase family.</text>
</comment>
<organism>
    <name type="scientific">Shewanella oneidensis (strain ATCC 700550 / JCM 31522 / CIP 106686 / LMG 19005 / NCIMB 14063 / MR-1)</name>
    <dbReference type="NCBI Taxonomy" id="211586"/>
    <lineage>
        <taxon>Bacteria</taxon>
        <taxon>Pseudomonadati</taxon>
        <taxon>Pseudomonadota</taxon>
        <taxon>Gammaproteobacteria</taxon>
        <taxon>Alteromonadales</taxon>
        <taxon>Shewanellaceae</taxon>
        <taxon>Shewanella</taxon>
    </lineage>
</organism>
<keyword id="KW-0378">Hydrolase</keyword>
<keyword id="KW-0460">Magnesium</keyword>
<keyword id="KW-0464">Manganese</keyword>
<keyword id="KW-0479">Metal-binding</keyword>
<keyword id="KW-0546">Nucleotide metabolism</keyword>
<keyword id="KW-0547">Nucleotide-binding</keyword>
<keyword id="KW-1185">Reference proteome</keyword>
<sequence length="179" mass="19615">MQQNIIKVIVGSKNPVKVNAAANAMTLLFPEYQIQTIGMDAPSGVPAQPMTDSDTRQGAINRVNYCQQHAEADYYFAMEGGVDHFEFGPATFAYIAIAHQQRLSIGRGALLPLPRQVYQALEAGEELGHVMDRLFNTVNIKQKGGAIGLLTHGHATRESNYTQALILAMAPFLNPEIYL</sequence>
<protein>
    <recommendedName>
        <fullName evidence="1">Inosine/xanthosine triphosphatase</fullName>
        <shortName evidence="1">ITPase/XTPase</shortName>
        <ecNumber evidence="1">3.6.1.73</ecNumber>
    </recommendedName>
    <alternativeName>
        <fullName evidence="1">Non-canonical purine NTP phosphatase</fullName>
    </alternativeName>
    <alternativeName>
        <fullName evidence="1">Non-standard purine NTP phosphatase</fullName>
    </alternativeName>
    <alternativeName>
        <fullName evidence="1">Nucleoside-triphosphate phosphatase</fullName>
        <shortName evidence="1">NTPase</shortName>
    </alternativeName>
</protein>